<reference key="1">
    <citation type="journal article" date="1987" name="Gene">
        <title>The nucleotide sequence of the gene coding for Drosophila melanogaster yolk protein 3.</title>
        <authorList>
            <person name="Garabedian M.J."/>
            <person name="Shirras A.D."/>
            <person name="Bownes M."/>
            <person name="Wensink P.C."/>
        </authorList>
    </citation>
    <scope>NUCLEOTIDE SEQUENCE [GENOMIC DNA]</scope>
    <source>
        <strain>Canton-S</strain>
    </source>
</reference>
<reference key="2">
    <citation type="journal article" date="1987" name="Nucleic Acids Res.">
        <title>Sequence homologies among the three yolk polypeptide (Yp) genes in Drosophila melanogaster.</title>
        <authorList>
            <person name="Yan Y.L."/>
            <person name="Kunert C.J."/>
            <person name="Postlethwait J.H."/>
        </authorList>
    </citation>
    <scope>NUCLEOTIDE SEQUENCE [GENOMIC DNA]</scope>
</reference>
<reference key="3">
    <citation type="journal article" date="1991" name="Mol. Gen. Genet.">
        <title>Characterization, molecular cloning and sequencing of YP3s1, a fertile yolk protein 3 mutant in Drosophila.</title>
        <authorList>
            <person name="Liddell S."/>
            <person name="Bownes M."/>
        </authorList>
    </citation>
    <scope>NUCLEOTIDE SEQUENCE</scope>
    <scope>TISSUE SPECIFICITY</scope>
    <scope>DEVELOPMENTAL STAGE</scope>
    <scope>INDUCTION</scope>
    <scope>MUTAGENESIS OF ALA-10</scope>
</reference>
<reference key="4">
    <citation type="journal article" date="2000" name="Science">
        <title>The genome sequence of Drosophila melanogaster.</title>
        <authorList>
            <person name="Adams M.D."/>
            <person name="Celniker S.E."/>
            <person name="Holt R.A."/>
            <person name="Evans C.A."/>
            <person name="Gocayne J.D."/>
            <person name="Amanatides P.G."/>
            <person name="Scherer S.E."/>
            <person name="Li P.W."/>
            <person name="Hoskins R.A."/>
            <person name="Galle R.F."/>
            <person name="George R.A."/>
            <person name="Lewis S.E."/>
            <person name="Richards S."/>
            <person name="Ashburner M."/>
            <person name="Henderson S.N."/>
            <person name="Sutton G.G."/>
            <person name="Wortman J.R."/>
            <person name="Yandell M.D."/>
            <person name="Zhang Q."/>
            <person name="Chen L.X."/>
            <person name="Brandon R.C."/>
            <person name="Rogers Y.-H.C."/>
            <person name="Blazej R.G."/>
            <person name="Champe M."/>
            <person name="Pfeiffer B.D."/>
            <person name="Wan K.H."/>
            <person name="Doyle C."/>
            <person name="Baxter E.G."/>
            <person name="Helt G."/>
            <person name="Nelson C.R."/>
            <person name="Miklos G.L.G."/>
            <person name="Abril J.F."/>
            <person name="Agbayani A."/>
            <person name="An H.-J."/>
            <person name="Andrews-Pfannkoch C."/>
            <person name="Baldwin D."/>
            <person name="Ballew R.M."/>
            <person name="Basu A."/>
            <person name="Baxendale J."/>
            <person name="Bayraktaroglu L."/>
            <person name="Beasley E.M."/>
            <person name="Beeson K.Y."/>
            <person name="Benos P.V."/>
            <person name="Berman B.P."/>
            <person name="Bhandari D."/>
            <person name="Bolshakov S."/>
            <person name="Borkova D."/>
            <person name="Botchan M.R."/>
            <person name="Bouck J."/>
            <person name="Brokstein P."/>
            <person name="Brottier P."/>
            <person name="Burtis K.C."/>
            <person name="Busam D.A."/>
            <person name="Butler H."/>
            <person name="Cadieu E."/>
            <person name="Center A."/>
            <person name="Chandra I."/>
            <person name="Cherry J.M."/>
            <person name="Cawley S."/>
            <person name="Dahlke C."/>
            <person name="Davenport L.B."/>
            <person name="Davies P."/>
            <person name="de Pablos B."/>
            <person name="Delcher A."/>
            <person name="Deng Z."/>
            <person name="Mays A.D."/>
            <person name="Dew I."/>
            <person name="Dietz S.M."/>
            <person name="Dodson K."/>
            <person name="Doup L.E."/>
            <person name="Downes M."/>
            <person name="Dugan-Rocha S."/>
            <person name="Dunkov B.C."/>
            <person name="Dunn P."/>
            <person name="Durbin K.J."/>
            <person name="Evangelista C.C."/>
            <person name="Ferraz C."/>
            <person name="Ferriera S."/>
            <person name="Fleischmann W."/>
            <person name="Fosler C."/>
            <person name="Gabrielian A.E."/>
            <person name="Garg N.S."/>
            <person name="Gelbart W.M."/>
            <person name="Glasser K."/>
            <person name="Glodek A."/>
            <person name="Gong F."/>
            <person name="Gorrell J.H."/>
            <person name="Gu Z."/>
            <person name="Guan P."/>
            <person name="Harris M."/>
            <person name="Harris N.L."/>
            <person name="Harvey D.A."/>
            <person name="Heiman T.J."/>
            <person name="Hernandez J.R."/>
            <person name="Houck J."/>
            <person name="Hostin D."/>
            <person name="Houston K.A."/>
            <person name="Howland T.J."/>
            <person name="Wei M.-H."/>
            <person name="Ibegwam C."/>
            <person name="Jalali M."/>
            <person name="Kalush F."/>
            <person name="Karpen G.H."/>
            <person name="Ke Z."/>
            <person name="Kennison J.A."/>
            <person name="Ketchum K.A."/>
            <person name="Kimmel B.E."/>
            <person name="Kodira C.D."/>
            <person name="Kraft C.L."/>
            <person name="Kravitz S."/>
            <person name="Kulp D."/>
            <person name="Lai Z."/>
            <person name="Lasko P."/>
            <person name="Lei Y."/>
            <person name="Levitsky A.A."/>
            <person name="Li J.H."/>
            <person name="Li Z."/>
            <person name="Liang Y."/>
            <person name="Lin X."/>
            <person name="Liu X."/>
            <person name="Mattei B."/>
            <person name="McIntosh T.C."/>
            <person name="McLeod M.P."/>
            <person name="McPherson D."/>
            <person name="Merkulov G."/>
            <person name="Milshina N.V."/>
            <person name="Mobarry C."/>
            <person name="Morris J."/>
            <person name="Moshrefi A."/>
            <person name="Mount S.M."/>
            <person name="Moy M."/>
            <person name="Murphy B."/>
            <person name="Murphy L."/>
            <person name="Muzny D.M."/>
            <person name="Nelson D.L."/>
            <person name="Nelson D.R."/>
            <person name="Nelson K.A."/>
            <person name="Nixon K."/>
            <person name="Nusskern D.R."/>
            <person name="Pacleb J.M."/>
            <person name="Palazzolo M."/>
            <person name="Pittman G.S."/>
            <person name="Pan S."/>
            <person name="Pollard J."/>
            <person name="Puri V."/>
            <person name="Reese M.G."/>
            <person name="Reinert K."/>
            <person name="Remington K."/>
            <person name="Saunders R.D.C."/>
            <person name="Scheeler F."/>
            <person name="Shen H."/>
            <person name="Shue B.C."/>
            <person name="Siden-Kiamos I."/>
            <person name="Simpson M."/>
            <person name="Skupski M.P."/>
            <person name="Smith T.J."/>
            <person name="Spier E."/>
            <person name="Spradling A.C."/>
            <person name="Stapleton M."/>
            <person name="Strong R."/>
            <person name="Sun E."/>
            <person name="Svirskas R."/>
            <person name="Tector C."/>
            <person name="Turner R."/>
            <person name="Venter E."/>
            <person name="Wang A.H."/>
            <person name="Wang X."/>
            <person name="Wang Z.-Y."/>
            <person name="Wassarman D.A."/>
            <person name="Weinstock G.M."/>
            <person name="Weissenbach J."/>
            <person name="Williams S.M."/>
            <person name="Woodage T."/>
            <person name="Worley K.C."/>
            <person name="Wu D."/>
            <person name="Yang S."/>
            <person name="Yao Q.A."/>
            <person name="Ye J."/>
            <person name="Yeh R.-F."/>
            <person name="Zaveri J.S."/>
            <person name="Zhan M."/>
            <person name="Zhang G."/>
            <person name="Zhao Q."/>
            <person name="Zheng L."/>
            <person name="Zheng X.H."/>
            <person name="Zhong F.N."/>
            <person name="Zhong W."/>
            <person name="Zhou X."/>
            <person name="Zhu S.C."/>
            <person name="Zhu X."/>
            <person name="Smith H.O."/>
            <person name="Gibbs R.A."/>
            <person name="Myers E.W."/>
            <person name="Rubin G.M."/>
            <person name="Venter J.C."/>
        </authorList>
    </citation>
    <scope>NUCLEOTIDE SEQUENCE [LARGE SCALE GENOMIC DNA]</scope>
    <source>
        <strain>Berkeley</strain>
    </source>
</reference>
<reference key="5">
    <citation type="journal article" date="2002" name="Genome Biol.">
        <title>Annotation of the Drosophila melanogaster euchromatic genome: a systematic review.</title>
        <authorList>
            <person name="Misra S."/>
            <person name="Crosby M.A."/>
            <person name="Mungall C.J."/>
            <person name="Matthews B.B."/>
            <person name="Campbell K.S."/>
            <person name="Hradecky P."/>
            <person name="Huang Y."/>
            <person name="Kaminker J.S."/>
            <person name="Millburn G.H."/>
            <person name="Prochnik S.E."/>
            <person name="Smith C.D."/>
            <person name="Tupy J.L."/>
            <person name="Whitfield E.J."/>
            <person name="Bayraktaroglu L."/>
            <person name="Berman B.P."/>
            <person name="Bettencourt B.R."/>
            <person name="Celniker S.E."/>
            <person name="de Grey A.D.N.J."/>
            <person name="Drysdale R.A."/>
            <person name="Harris N.L."/>
            <person name="Richter J."/>
            <person name="Russo S."/>
            <person name="Schroeder A.J."/>
            <person name="Shu S.Q."/>
            <person name="Stapleton M."/>
            <person name="Yamada C."/>
            <person name="Ashburner M."/>
            <person name="Gelbart W.M."/>
            <person name="Rubin G.M."/>
            <person name="Lewis S.E."/>
        </authorList>
    </citation>
    <scope>GENOME REANNOTATION</scope>
    <source>
        <strain>Berkeley</strain>
    </source>
</reference>
<reference key="6">
    <citation type="journal article" date="2002" name="Genome Biol.">
        <title>A Drosophila full-length cDNA resource.</title>
        <authorList>
            <person name="Stapleton M."/>
            <person name="Carlson J.W."/>
            <person name="Brokstein P."/>
            <person name="Yu C."/>
            <person name="Champe M."/>
            <person name="George R.A."/>
            <person name="Guarin H."/>
            <person name="Kronmiller B."/>
            <person name="Pacleb J.M."/>
            <person name="Park S."/>
            <person name="Wan K.H."/>
            <person name="Rubin G.M."/>
            <person name="Celniker S.E."/>
        </authorList>
    </citation>
    <scope>NUCLEOTIDE SEQUENCE [LARGE SCALE MRNA]</scope>
    <source>
        <strain>Berkeley</strain>
        <tissue>Head</tissue>
    </source>
</reference>
<reference key="7">
    <citation type="journal article" date="1985" name="J. Biol. Chem.">
        <title>Tyrosine sulfation of yolk proteins 1, 2, and 3 in Drosophila melanogaster.</title>
        <authorList>
            <person name="Baeuerle P.A."/>
            <person name="Huttner W.B."/>
        </authorList>
    </citation>
    <scope>SULFATION</scope>
</reference>
<reference key="8">
    <citation type="journal article" date="2008" name="J. Proteome Res.">
        <title>Phosphoproteome analysis of Drosophila melanogaster embryos.</title>
        <authorList>
            <person name="Zhai B."/>
            <person name="Villen J."/>
            <person name="Beausoleil S.A."/>
            <person name="Mintseris J."/>
            <person name="Gygi S.P."/>
        </authorList>
    </citation>
    <scope>PHOSPHORYLATION [LARGE SCALE ANALYSIS] AT THR-37; SER-177 AND SER-178</scope>
    <scope>IDENTIFICATION BY MASS SPECTROMETRY</scope>
    <source>
        <tissue>Embryo</tissue>
    </source>
</reference>
<reference key="9">
    <citation type="journal article" date="2021" name="PLoS Biol.">
        <title>Receptor-mediated yolk uptake is required for oskar mRNA localization and cortical anchorage of germ plasm components in the Drosophila oocyte.</title>
        <authorList>
            <person name="Tanaka T."/>
            <person name="Tani N."/>
            <person name="Nakamura A."/>
        </authorList>
    </citation>
    <scope>FUNCTION</scope>
    <scope>DISRUPTION PHENOTYPE</scope>
</reference>
<evidence type="ECO:0000255" key="1"/>
<evidence type="ECO:0000256" key="2">
    <source>
        <dbReference type="SAM" id="MobiDB-lite"/>
    </source>
</evidence>
<evidence type="ECO:0000269" key="3">
    <source>
    </source>
</evidence>
<evidence type="ECO:0000269" key="4">
    <source>
    </source>
</evidence>
<evidence type="ECO:0000269" key="5">
    <source>
    </source>
</evidence>
<evidence type="ECO:0000269" key="6">
    <source>
    </source>
</evidence>
<evidence type="ECO:0000305" key="7"/>
<name>VIT3_DROME</name>
<dbReference type="EMBL" id="M15898">
    <property type="protein sequence ID" value="AAA29024.1"/>
    <property type="molecule type" value="Genomic_DNA"/>
</dbReference>
<dbReference type="EMBL" id="X04754">
    <property type="protein sequence ID" value="CAA28451.1"/>
    <property type="molecule type" value="Genomic_DNA"/>
</dbReference>
<dbReference type="EMBL" id="AE014298">
    <property type="protein sequence ID" value="AAF48314.2"/>
    <property type="molecule type" value="Genomic_DNA"/>
</dbReference>
<dbReference type="EMBL" id="AY113561">
    <property type="protein sequence ID" value="AAM29566.1"/>
    <property type="status" value="ALT_FRAME"/>
    <property type="molecule type" value="mRNA"/>
</dbReference>
<dbReference type="PIR" id="A25876">
    <property type="entry name" value="A25876"/>
</dbReference>
<dbReference type="RefSeq" id="NP_001285228.1">
    <property type="nucleotide sequence ID" value="NM_001298299.1"/>
</dbReference>
<dbReference type="RefSeq" id="NP_511148.2">
    <property type="nucleotide sequence ID" value="NM_078593.4"/>
</dbReference>
<dbReference type="SMR" id="P06607"/>
<dbReference type="BioGRID" id="58712">
    <property type="interactions" value="36"/>
</dbReference>
<dbReference type="DIP" id="DIP-19265N"/>
<dbReference type="FunCoup" id="P06607">
    <property type="interactions" value="20"/>
</dbReference>
<dbReference type="IntAct" id="P06607">
    <property type="interactions" value="71"/>
</dbReference>
<dbReference type="MINT" id="P06607"/>
<dbReference type="STRING" id="7227.FBpp0311924"/>
<dbReference type="ESTHER" id="drome-3vite">
    <property type="family name" value="Yolk-Protein_dipter"/>
</dbReference>
<dbReference type="iPTMnet" id="P06607"/>
<dbReference type="PaxDb" id="7227-FBpp0073652"/>
<dbReference type="DNASU" id="32339"/>
<dbReference type="EnsemblMetazoa" id="FBtr0073821">
    <property type="protein sequence ID" value="FBpp0073652"/>
    <property type="gene ID" value="FBgn0004047"/>
</dbReference>
<dbReference type="EnsemblMetazoa" id="FBtr0346090">
    <property type="protein sequence ID" value="FBpp0311924"/>
    <property type="gene ID" value="FBgn0004047"/>
</dbReference>
<dbReference type="GeneID" id="32339"/>
<dbReference type="KEGG" id="dme:Dmel_CG11129"/>
<dbReference type="AGR" id="FB:FBgn0004047"/>
<dbReference type="CTD" id="32339"/>
<dbReference type="FlyBase" id="FBgn0004047">
    <property type="gene designation" value="Yp3"/>
</dbReference>
<dbReference type="VEuPathDB" id="VectorBase:FBgn0004047"/>
<dbReference type="eggNOG" id="ENOG502SRF1">
    <property type="taxonomic scope" value="Eukaryota"/>
</dbReference>
<dbReference type="HOGENOM" id="CLU_027171_6_0_1"/>
<dbReference type="InParanoid" id="P06607"/>
<dbReference type="OMA" id="QNTGAMI"/>
<dbReference type="OrthoDB" id="6770740at2759"/>
<dbReference type="PhylomeDB" id="P06607"/>
<dbReference type="Reactome" id="R-DME-1483166">
    <property type="pathway name" value="Synthesis of PA"/>
</dbReference>
<dbReference type="BioGRID-ORCS" id="32339">
    <property type="hits" value="0 hits in 1 CRISPR screen"/>
</dbReference>
<dbReference type="ChiTaRS" id="Yp3">
    <property type="organism name" value="fly"/>
</dbReference>
<dbReference type="GenomeRNAi" id="32339"/>
<dbReference type="PRO" id="PR:P06607"/>
<dbReference type="Proteomes" id="UP000000803">
    <property type="component" value="Chromosome X"/>
</dbReference>
<dbReference type="Bgee" id="FBgn0004047">
    <property type="expression patterns" value="Expressed in head capsule and 186 other cell types or tissues"/>
</dbReference>
<dbReference type="ExpressionAtlas" id="P06607">
    <property type="expression patterns" value="baseline and differential"/>
</dbReference>
<dbReference type="GO" id="GO:0005576">
    <property type="term" value="C:extracellular region"/>
    <property type="evidence" value="ECO:0000315"/>
    <property type="project" value="UniProtKB"/>
</dbReference>
<dbReference type="GO" id="GO:0005615">
    <property type="term" value="C:extracellular space"/>
    <property type="evidence" value="ECO:0000318"/>
    <property type="project" value="GO_Central"/>
</dbReference>
<dbReference type="GO" id="GO:0043186">
    <property type="term" value="C:P granule"/>
    <property type="evidence" value="ECO:0000353"/>
    <property type="project" value="FlyBase"/>
</dbReference>
<dbReference type="GO" id="GO:0017171">
    <property type="term" value="F:serine hydrolase activity"/>
    <property type="evidence" value="ECO:0007005"/>
    <property type="project" value="FlyBase"/>
</dbReference>
<dbReference type="GO" id="GO:0009792">
    <property type="term" value="P:embryo development ending in birth or egg hatching"/>
    <property type="evidence" value="ECO:0000315"/>
    <property type="project" value="UniProtKB"/>
</dbReference>
<dbReference type="GO" id="GO:0016042">
    <property type="term" value="P:lipid catabolic process"/>
    <property type="evidence" value="ECO:0000318"/>
    <property type="project" value="GO_Central"/>
</dbReference>
<dbReference type="GO" id="GO:0045995">
    <property type="term" value="P:regulation of embryonic development"/>
    <property type="evidence" value="ECO:0000315"/>
    <property type="project" value="FlyBase"/>
</dbReference>
<dbReference type="GO" id="GO:0009617">
    <property type="term" value="P:response to bacterium"/>
    <property type="evidence" value="ECO:0007007"/>
    <property type="project" value="FlyBase"/>
</dbReference>
<dbReference type="GO" id="GO:0007548">
    <property type="term" value="P:sex differentiation"/>
    <property type="evidence" value="ECO:0000303"/>
    <property type="project" value="FlyBase"/>
</dbReference>
<dbReference type="FunFam" id="3.40.50.1820:FF:000227">
    <property type="entry name" value="Yolk protein 2"/>
    <property type="match status" value="1"/>
</dbReference>
<dbReference type="Gene3D" id="3.40.50.1820">
    <property type="entry name" value="alpha/beta hydrolase"/>
    <property type="match status" value="1"/>
</dbReference>
<dbReference type="InterPro" id="IPR029058">
    <property type="entry name" value="AB_hydrolase_fold"/>
</dbReference>
<dbReference type="InterPro" id="IPR013818">
    <property type="entry name" value="Lipase"/>
</dbReference>
<dbReference type="InterPro" id="IPR000734">
    <property type="entry name" value="TAG_lipase"/>
</dbReference>
<dbReference type="PANTHER" id="PTHR11610:SF149">
    <property type="entry name" value="FI01450P-RELATED"/>
    <property type="match status" value="1"/>
</dbReference>
<dbReference type="PANTHER" id="PTHR11610">
    <property type="entry name" value="LIPASE"/>
    <property type="match status" value="1"/>
</dbReference>
<dbReference type="Pfam" id="PF00151">
    <property type="entry name" value="Lipase"/>
    <property type="match status" value="1"/>
</dbReference>
<dbReference type="SUPFAM" id="SSF53474">
    <property type="entry name" value="alpha/beta-Hydrolases"/>
    <property type="match status" value="1"/>
</dbReference>
<accession>P06607</accession>
<accession>Q8MYV8</accession>
<accession>Q9VY89</accession>
<comment type="function">
    <text evidence="5">Vitellogenin is the major yolk protein of eggs where it is used as a food source during embryogenesis. Vitellogenins and their receptor yl/yolkless are required for maintenance of microtubule plus-end orientation towards the posterior pole of oocytes (PubMed:33891588). Involved in polarized localization of germ plasm components, such as osk mRNA and vas protein, to the oocyte posterior cortex (PubMed:33891588). Receptor-mediated endocytosis by yl/yolkless is crucial for actin reorganization, mediated by osk isoform A/Long, required to anchor germ plasm components to the oocyte cortex (PubMed:33891588).</text>
</comment>
<comment type="subcellular location">
    <subcellularLocation>
        <location>Secreted</location>
    </subcellularLocation>
</comment>
<comment type="tissue specificity">
    <text evidence="4">Synthesized in the fat body and ovarian follicle cells and accumulate in the oocyte.</text>
</comment>
<comment type="developmental stage">
    <text evidence="4">Expressed in females only.</text>
</comment>
<comment type="induction">
    <text evidence="4">By beta-ecdysone; in males.</text>
</comment>
<comment type="PTM">
    <text evidence="6">Tyrosine sulfation occurs in the female only and plays an essential functional role.</text>
</comment>
<comment type="disruption phenotype">
    <text evidence="5">Viable, even in combination with null mutations in Yp1 and Yp2.</text>
</comment>
<comment type="similarity">
    <text evidence="7">Belongs to the AB hydrolase superfamily. Lipase family.</text>
</comment>
<comment type="sequence caution" evidence="7">
    <conflict type="frameshift">
        <sequence resource="EMBL-CDS" id="AAM29566"/>
    </conflict>
</comment>
<protein>
    <recommendedName>
        <fullName>Vitellogenin-3</fullName>
    </recommendedName>
    <alternativeName>
        <fullName>Vitellogenin III</fullName>
    </alternativeName>
    <alternativeName>
        <fullName>Yolk protein 3</fullName>
    </alternativeName>
</protein>
<gene>
    <name type="primary">Yp3</name>
    <name type="ORF">CG11129</name>
</gene>
<organism>
    <name type="scientific">Drosophila melanogaster</name>
    <name type="common">Fruit fly</name>
    <dbReference type="NCBI Taxonomy" id="7227"/>
    <lineage>
        <taxon>Eukaryota</taxon>
        <taxon>Metazoa</taxon>
        <taxon>Ecdysozoa</taxon>
        <taxon>Arthropoda</taxon>
        <taxon>Hexapoda</taxon>
        <taxon>Insecta</taxon>
        <taxon>Pterygota</taxon>
        <taxon>Neoptera</taxon>
        <taxon>Endopterygota</taxon>
        <taxon>Diptera</taxon>
        <taxon>Brachycera</taxon>
        <taxon>Muscomorpha</taxon>
        <taxon>Ephydroidea</taxon>
        <taxon>Drosophilidae</taxon>
        <taxon>Drosophila</taxon>
        <taxon>Sophophora</taxon>
    </lineage>
</organism>
<keyword id="KW-0597">Phosphoprotein</keyword>
<keyword id="KW-1185">Reference proteome</keyword>
<keyword id="KW-0964">Secreted</keyword>
<keyword id="KW-0732">Signal</keyword>
<keyword id="KW-0765">Sulfation</keyword>
<proteinExistence type="evidence at protein level"/>
<sequence>MMSLRICLLATCLLVAAHASKDASNDRLKPTKWLTATELENVPSLNDITWERLENQPLEQGAKVIEKIYHVGQIKHDLTPSFVPSPSNVPVWIIKSNGQKVECKLNNYVETAKAQPGFGEDEVTIVLTGLPKTSPAQQKAMRRLIQAYVQKYNLQQLQKNAQEQQQQLKSSDYDYTSSEEAADQWKSAKAASGDLIIIDLGSTLTNFKRYAMLDVLNTGAMIGQTLIDLTNKGVPQEIIHLIGQGISAHVAGAAGNKYTAQTGHKLRRITGLDPAKVLSKRPQILGGLSRGDADFVDAIHTSTFAMGTPIRCGDVDFYPNGPSTGVPGSENVIEAVARATRYFAESVRPGSERNFPAVPANSLKQYKEQDGFGKRAYMGLQIDYDLRGDYILEVNAKSPFGQRSPAHKQAAYHGMHHAQN</sequence>
<feature type="signal peptide">
    <location>
        <begin position="1"/>
        <end position="19"/>
    </location>
</feature>
<feature type="chain" id="PRO_0000017816" description="Vitellogenin-3">
    <location>
        <begin position="20"/>
        <end position="420"/>
    </location>
</feature>
<feature type="region of interest" description="Disordered" evidence="2">
    <location>
        <begin position="401"/>
        <end position="420"/>
    </location>
</feature>
<feature type="modified residue" description="Phosphothreonine" evidence="3">
    <location>
        <position position="37"/>
    </location>
</feature>
<feature type="modified residue" description="Phosphoserine" evidence="3">
    <location>
        <position position="177"/>
    </location>
</feature>
<feature type="modified residue" description="Phosphoserine" evidence="3">
    <location>
        <position position="178"/>
    </location>
</feature>
<feature type="modified residue" description="Sulfotyrosine" evidence="1">
    <location>
        <position position="384"/>
    </location>
</feature>
<feature type="modified residue" description="Sulfotyrosine" evidence="1">
    <location>
        <position position="390"/>
    </location>
</feature>
<feature type="mutagenesis site" description="In YP3s1; synthesized in the fat body, but not secreted, probably due to the amino acid mutation in the signal peptide." evidence="4">
    <original>A</original>
    <variation>D</variation>
    <location>
        <position position="10"/>
    </location>
</feature>